<keyword id="KW-0479">Metal-binding</keyword>
<keyword id="KW-0539">Nucleus</keyword>
<keyword id="KW-0677">Repeat</keyword>
<keyword id="KW-0804">Transcription</keyword>
<keyword id="KW-0805">Transcription regulation</keyword>
<keyword id="KW-0862">Zinc</keyword>
<keyword id="KW-0863">Zinc-finger</keyword>
<feature type="chain" id="PRO_0000459085" description="C2H2-type transcription factor ffmA">
    <location>
        <begin position="1"/>
        <end position="493"/>
    </location>
</feature>
<feature type="zinc finger region" description="C2H2-type 1" evidence="1">
    <location>
        <begin position="212"/>
        <end position="234"/>
    </location>
</feature>
<feature type="zinc finger region" description="C2H2-type 2; degenerate" evidence="1">
    <location>
        <begin position="240"/>
        <end position="265"/>
    </location>
</feature>
<feature type="region of interest" description="Disordered" evidence="2">
    <location>
        <begin position="1"/>
        <end position="50"/>
    </location>
</feature>
<feature type="region of interest" description="Disordered" evidence="2">
    <location>
        <begin position="68"/>
        <end position="140"/>
    </location>
</feature>
<feature type="region of interest" description="Disordered" evidence="2">
    <location>
        <begin position="164"/>
        <end position="202"/>
    </location>
</feature>
<feature type="region of interest" description="Disordered" evidence="2">
    <location>
        <begin position="288"/>
        <end position="316"/>
    </location>
</feature>
<feature type="region of interest" description="Disordered" evidence="2">
    <location>
        <begin position="468"/>
        <end position="493"/>
    </location>
</feature>
<feature type="compositionally biased region" description="Low complexity" evidence="2">
    <location>
        <begin position="1"/>
        <end position="18"/>
    </location>
</feature>
<feature type="compositionally biased region" description="Polar residues" evidence="2">
    <location>
        <begin position="69"/>
        <end position="79"/>
    </location>
</feature>
<feature type="compositionally biased region" description="Polar residues" evidence="2">
    <location>
        <begin position="192"/>
        <end position="202"/>
    </location>
</feature>
<feature type="compositionally biased region" description="Polar residues" evidence="2">
    <location>
        <begin position="288"/>
        <end position="307"/>
    </location>
</feature>
<feature type="compositionally biased region" description="Polar residues" evidence="2">
    <location>
        <begin position="484"/>
        <end position="493"/>
    </location>
</feature>
<sequence length="493" mass="52786">MPMPQYTMQPQYPVSQPHTLPPLQPHHSQSPAPHSYMGQPPYRPDLSRYPASTHDVYASSAAPIMPHTTVGSLPPSTFLSHHNHQAQAQQSQHYPPPPHNVLPPASSAQTYPQPIAPAPPRDRRPDFNGMPSGAFSYPDGKASPWMNPDPVAAANGAGAYGAKEPPRTQVVGSQGRRGILPSVPGRVAPVTNGVNGTAKNTTIPAKDADGKFPCPHCNKTYLHAKHLKRHLLRHTGDRPYMCVLCKDTFSRSDILKRHFQKCSIRRGNPTGATHLSHPQAHLKRSQAQAAANTAKSLQEEVSSTVPPSNGIAGATFSEGAVNGNGLGAGRPGFTDQQPLGFTMQSVNGLGRGQPDDAYAHGQAHQRASWMATPKQNPYLVQPGTEAPNQQLNVDRPTLEQAKPSVVDPKRPMMPGPDPNHGGGLDWTSMFQAGASDGYINQVFPQSMASGQEPIQAQVETERKFYPTTTTAGPQEGGMNGLYLASTTLGGDGK</sequence>
<evidence type="ECO:0000255" key="1">
    <source>
        <dbReference type="PROSITE-ProRule" id="PRU00042"/>
    </source>
</evidence>
<evidence type="ECO:0000256" key="2">
    <source>
        <dbReference type="SAM" id="MobiDB-lite"/>
    </source>
</evidence>
<evidence type="ECO:0000269" key="3">
    <source>
    </source>
</evidence>
<evidence type="ECO:0000269" key="4">
    <source>
    </source>
</evidence>
<evidence type="ECO:0000269" key="5">
    <source>
    </source>
</evidence>
<evidence type="ECO:0000303" key="6">
    <source>
    </source>
</evidence>
<evidence type="ECO:0000303" key="7">
    <source>
    </source>
</evidence>
<evidence type="ECO:0000303" key="8">
    <source>
    </source>
</evidence>
<evidence type="ECO:0000305" key="9"/>
<evidence type="ECO:0000305" key="10">
    <source>
    </source>
</evidence>
<accession>B0XS89</accession>
<organism>
    <name type="scientific">Aspergillus fumigatus (strain CBS 144.89 / FGSC A1163 / CEA10)</name>
    <name type="common">Neosartorya fumigata</name>
    <dbReference type="NCBI Taxonomy" id="451804"/>
    <lineage>
        <taxon>Eukaryota</taxon>
        <taxon>Fungi</taxon>
        <taxon>Dikarya</taxon>
        <taxon>Ascomycota</taxon>
        <taxon>Pezizomycotina</taxon>
        <taxon>Eurotiomycetes</taxon>
        <taxon>Eurotiomycetidae</taxon>
        <taxon>Eurotiales</taxon>
        <taxon>Aspergillaceae</taxon>
        <taxon>Aspergillus</taxon>
        <taxon>Aspergillus subgen. Fumigati</taxon>
    </lineage>
</organism>
<dbReference type="EMBL" id="DS499595">
    <property type="protein sequence ID" value="EDP54575.1"/>
    <property type="molecule type" value="Genomic_DNA"/>
</dbReference>
<dbReference type="EnsemblFungi" id="EDP54575">
    <property type="protein sequence ID" value="EDP54575"/>
    <property type="gene ID" value="AFUB_026340"/>
</dbReference>
<dbReference type="HOGENOM" id="CLU_014245_2_0_1"/>
<dbReference type="OrthoDB" id="73227at5052"/>
<dbReference type="PhylomeDB" id="B0XS89"/>
<dbReference type="Proteomes" id="UP000001699">
    <property type="component" value="Unassembled WGS sequence"/>
</dbReference>
<dbReference type="GO" id="GO:0000785">
    <property type="term" value="C:chromatin"/>
    <property type="evidence" value="ECO:0007669"/>
    <property type="project" value="TreeGrafter"/>
</dbReference>
<dbReference type="GO" id="GO:0005634">
    <property type="term" value="C:nucleus"/>
    <property type="evidence" value="ECO:0007669"/>
    <property type="project" value="UniProtKB-SubCell"/>
</dbReference>
<dbReference type="GO" id="GO:0000981">
    <property type="term" value="F:DNA-binding transcription factor activity, RNA polymerase II-specific"/>
    <property type="evidence" value="ECO:0007669"/>
    <property type="project" value="InterPro"/>
</dbReference>
<dbReference type="GO" id="GO:0000978">
    <property type="term" value="F:RNA polymerase II cis-regulatory region sequence-specific DNA binding"/>
    <property type="evidence" value="ECO:0007669"/>
    <property type="project" value="InterPro"/>
</dbReference>
<dbReference type="GO" id="GO:0008270">
    <property type="term" value="F:zinc ion binding"/>
    <property type="evidence" value="ECO:0007669"/>
    <property type="project" value="UniProtKB-KW"/>
</dbReference>
<dbReference type="Gene3D" id="3.30.160.60">
    <property type="entry name" value="Classic Zinc Finger"/>
    <property type="match status" value="2"/>
</dbReference>
<dbReference type="InterPro" id="IPR051059">
    <property type="entry name" value="VerF-like"/>
</dbReference>
<dbReference type="InterPro" id="IPR036236">
    <property type="entry name" value="Znf_C2H2_sf"/>
</dbReference>
<dbReference type="InterPro" id="IPR013087">
    <property type="entry name" value="Znf_C2H2_type"/>
</dbReference>
<dbReference type="PANTHER" id="PTHR40626">
    <property type="entry name" value="MIP31509P"/>
    <property type="match status" value="1"/>
</dbReference>
<dbReference type="PANTHER" id="PTHR40626:SF12">
    <property type="entry name" value="RFEC"/>
    <property type="match status" value="1"/>
</dbReference>
<dbReference type="SMART" id="SM00355">
    <property type="entry name" value="ZnF_C2H2"/>
    <property type="match status" value="2"/>
</dbReference>
<dbReference type="SUPFAM" id="SSF57667">
    <property type="entry name" value="beta-beta-alpha zinc fingers"/>
    <property type="match status" value="1"/>
</dbReference>
<dbReference type="PROSITE" id="PS00028">
    <property type="entry name" value="ZINC_FINGER_C2H2_1"/>
    <property type="match status" value="1"/>
</dbReference>
<dbReference type="PROSITE" id="PS50157">
    <property type="entry name" value="ZINC_FINGER_C2H2_2"/>
    <property type="match status" value="1"/>
</dbReference>
<proteinExistence type="inferred from homology"/>
<gene>
    <name evidence="7" type="primary">ffmA</name>
    <name evidence="6" type="synonym">rfeC</name>
    <name type="ORF">AFUB_026340</name>
</gene>
<protein>
    <recommendedName>
        <fullName evidence="8">C2H2-type transcription factor ffmA</fullName>
    </recommendedName>
    <alternativeName>
        <fullName evidence="7">Favors fermentative metabolism protein A</fullName>
    </alternativeName>
    <alternativeName>
        <fullName evidence="6">Regulator of FLO11 protein C</fullName>
    </alternativeName>
</protein>
<reference key="1">
    <citation type="journal article" date="2008" name="PLoS Genet.">
        <title>Genomic islands in the pathogenic filamentous fungus Aspergillus fumigatus.</title>
        <authorList>
            <person name="Fedorova N.D."/>
            <person name="Khaldi N."/>
            <person name="Joardar V.S."/>
            <person name="Maiti R."/>
            <person name="Amedeo P."/>
            <person name="Anderson M.J."/>
            <person name="Crabtree J."/>
            <person name="Silva J.C."/>
            <person name="Badger J.H."/>
            <person name="Albarraq A."/>
            <person name="Angiuoli S."/>
            <person name="Bussey H."/>
            <person name="Bowyer P."/>
            <person name="Cotty P.J."/>
            <person name="Dyer P.S."/>
            <person name="Egan A."/>
            <person name="Galens K."/>
            <person name="Fraser-Liggett C.M."/>
            <person name="Haas B.J."/>
            <person name="Inman J.M."/>
            <person name="Kent R."/>
            <person name="Lemieux S."/>
            <person name="Malavazi I."/>
            <person name="Orvis J."/>
            <person name="Roemer T."/>
            <person name="Ronning C.M."/>
            <person name="Sundaram J.P."/>
            <person name="Sutton G."/>
            <person name="Turner G."/>
            <person name="Venter J.C."/>
            <person name="White O.R."/>
            <person name="Whitty B.R."/>
            <person name="Youngman P."/>
            <person name="Wolfe K.H."/>
            <person name="Goldman G.H."/>
            <person name="Wortman J.R."/>
            <person name="Jiang B."/>
            <person name="Denning D.W."/>
            <person name="Nierman W.C."/>
        </authorList>
    </citation>
    <scope>NUCLEOTIDE SEQUENCE [LARGE SCALE GENOMIC DNA]</scope>
    <source>
        <strain>CBS 144.89 / FGSC A1163 / CEA10</strain>
    </source>
</reference>
<reference key="2">
    <citation type="journal article" date="2003" name="Nat. Biotechnol.">
        <title>Integrating transcriptional and metabolite profiles to direct the engineering of lovastatin-producing fungal strains.</title>
        <authorList>
            <person name="Askenazi M."/>
            <person name="Driggers E.M."/>
            <person name="Holtzman D.A."/>
            <person name="Norman T.C."/>
            <person name="Iverson S."/>
            <person name="Zimmer D.P."/>
            <person name="Boers M.E."/>
            <person name="Blomquist P.R."/>
            <person name="Martinez E.J."/>
            <person name="Monreal A.W."/>
            <person name="Feibelman T.P."/>
            <person name="Mayorga M.E."/>
            <person name="Maxon M.E."/>
            <person name="Sykes K."/>
            <person name="Tobin J.V."/>
            <person name="Cordero E."/>
            <person name="Salama S.R."/>
            <person name="Trueheart J."/>
            <person name="Royer J.C."/>
            <person name="Madden K.T."/>
        </authorList>
    </citation>
    <scope>FUNCTION</scope>
</reference>
<reference key="3">
    <citation type="journal article" date="2021" name="MBio">
        <title>Functional Genomic and Biochemical Analysis Reveals Pleiotropic Effect of Congo Red on Aspergillus fumigatus.</title>
        <authorList>
            <person name="Liu Z."/>
            <person name="Raj S."/>
            <person name="van Rhijn N."/>
            <person name="Fraczek M."/>
            <person name="Michel J.P."/>
            <person name="Sismeiro O."/>
            <person name="Legendre R."/>
            <person name="Varet H."/>
            <person name="Fontaine T."/>
            <person name="Bromley M."/>
            <person name="Latge J.P."/>
        </authorList>
    </citation>
    <scope>FUNCTION</scope>
    <scope>DISRUPTION PHENOTYPE</scope>
</reference>
<reference key="4">
    <citation type="journal article" date="2022" name="MSphere">
        <title>Aspergillus fumigatus ffmA encodes a C2H2-containing transcriptional regulator that modulates azole resistance and is required for normal growth.</title>
        <authorList>
            <person name="Paul S."/>
            <person name="Bowyer P."/>
            <person name="Bromley M."/>
            <person name="Moye-Rowley W.S."/>
        </authorList>
    </citation>
    <scope>FUNCTION</scope>
    <scope>DISRUPTION PHENOTYPE</scope>
</reference>
<comment type="function">
    <text evidence="3 4 5">Transcription factor that acts in coordination with atrR to regulate the expression of the ABC-type multidrug transporter abcG1 and thus plays a role in azole susceptibility (PubMed:35138125). Regulates the expression of genes involved in fermentation (PubMed:34006660). Is able to promote expression from the yeast FLO11 promoter (PubMed:12536215).</text>
</comment>
<comment type="subcellular location">
    <subcellularLocation>
        <location evidence="10">Nucleus</location>
    </subcellularLocation>
</comment>
<comment type="disruption phenotype">
    <text evidence="5">Reduces the growth rate, impairs the production of abcG1 and leads to increased susceptibility to itraconazole.</text>
</comment>
<comment type="similarity">
    <text evidence="9">Belongs to the krueppel C2H2-type zinc-finger protein family.</text>
</comment>
<name>FFMA_ASPFC</name>